<accession>B7UZ17</accession>
<protein>
    <recommendedName>
        <fullName evidence="1">UPF0386 protein PLES_46181</fullName>
    </recommendedName>
</protein>
<feature type="chain" id="PRO_1000200704" description="UPF0386 protein PLES_46181">
    <location>
        <begin position="1"/>
        <end position="85"/>
    </location>
</feature>
<organism>
    <name type="scientific">Pseudomonas aeruginosa (strain LESB58)</name>
    <dbReference type="NCBI Taxonomy" id="557722"/>
    <lineage>
        <taxon>Bacteria</taxon>
        <taxon>Pseudomonadati</taxon>
        <taxon>Pseudomonadota</taxon>
        <taxon>Gammaproteobacteria</taxon>
        <taxon>Pseudomonadales</taxon>
        <taxon>Pseudomonadaceae</taxon>
        <taxon>Pseudomonas</taxon>
    </lineage>
</organism>
<comment type="similarity">
    <text evidence="1">Belongs to the UPF0386 family.</text>
</comment>
<evidence type="ECO:0000255" key="1">
    <source>
        <dbReference type="HAMAP-Rule" id="MF_00827"/>
    </source>
</evidence>
<name>Y4618_PSEA8</name>
<proteinExistence type="inferred from homology"/>
<dbReference type="EMBL" id="FM209186">
    <property type="protein sequence ID" value="CAW29372.1"/>
    <property type="molecule type" value="Genomic_DNA"/>
</dbReference>
<dbReference type="RefSeq" id="WP_003085431.1">
    <property type="nucleotide sequence ID" value="NC_011770.1"/>
</dbReference>
<dbReference type="KEGG" id="pag:PLES_46181"/>
<dbReference type="HOGENOM" id="CLU_164736_0_0_6"/>
<dbReference type="HAMAP" id="MF_00827">
    <property type="entry name" value="UPF0386"/>
    <property type="match status" value="1"/>
</dbReference>
<dbReference type="InterPro" id="IPR018654">
    <property type="entry name" value="YjhX_toxin"/>
</dbReference>
<dbReference type="NCBIfam" id="NF010240">
    <property type="entry name" value="PRK13687.1"/>
    <property type="match status" value="1"/>
</dbReference>
<dbReference type="Pfam" id="PF09857">
    <property type="entry name" value="YjhX_toxin"/>
    <property type="match status" value="1"/>
</dbReference>
<sequence length="85" mass="9511">MNVSKPEQRTLHALAQGGHIAFLRDASGKITRVECYNRDGHLLLDCTLAVFSRLKNKGLVHSRQGRPYRISMAGLKAVRPQADNR</sequence>
<reference key="1">
    <citation type="journal article" date="2009" name="Genome Res.">
        <title>Newly introduced genomic prophage islands are critical determinants of in vivo competitiveness in the Liverpool epidemic strain of Pseudomonas aeruginosa.</title>
        <authorList>
            <person name="Winstanley C."/>
            <person name="Langille M.G.I."/>
            <person name="Fothergill J.L."/>
            <person name="Kukavica-Ibrulj I."/>
            <person name="Paradis-Bleau C."/>
            <person name="Sanschagrin F."/>
            <person name="Thomson N.R."/>
            <person name="Winsor G.L."/>
            <person name="Quail M.A."/>
            <person name="Lennard N."/>
            <person name="Bignell A."/>
            <person name="Clarke L."/>
            <person name="Seeger K."/>
            <person name="Saunders D."/>
            <person name="Harris D."/>
            <person name="Parkhill J."/>
            <person name="Hancock R.E.W."/>
            <person name="Brinkman F.S.L."/>
            <person name="Levesque R.C."/>
        </authorList>
    </citation>
    <scope>NUCLEOTIDE SEQUENCE [LARGE SCALE GENOMIC DNA]</scope>
    <source>
        <strain>LESB58</strain>
    </source>
</reference>
<gene>
    <name type="ordered locus">PLES_46181</name>
</gene>